<proteinExistence type="inferred from homology"/>
<name>APAH_ECO57</name>
<evidence type="ECO:0000250" key="1"/>
<evidence type="ECO:0000255" key="2">
    <source>
        <dbReference type="HAMAP-Rule" id="MF_00199"/>
    </source>
</evidence>
<reference key="1">
    <citation type="journal article" date="2001" name="Nature">
        <title>Genome sequence of enterohaemorrhagic Escherichia coli O157:H7.</title>
        <authorList>
            <person name="Perna N.T."/>
            <person name="Plunkett G. III"/>
            <person name="Burland V."/>
            <person name="Mau B."/>
            <person name="Glasner J.D."/>
            <person name="Rose D.J."/>
            <person name="Mayhew G.F."/>
            <person name="Evans P.S."/>
            <person name="Gregor J."/>
            <person name="Kirkpatrick H.A."/>
            <person name="Posfai G."/>
            <person name="Hackett J."/>
            <person name="Klink S."/>
            <person name="Boutin A."/>
            <person name="Shao Y."/>
            <person name="Miller L."/>
            <person name="Grotbeck E.J."/>
            <person name="Davis N.W."/>
            <person name="Lim A."/>
            <person name="Dimalanta E.T."/>
            <person name="Potamousis K."/>
            <person name="Apodaca J."/>
            <person name="Anantharaman T.S."/>
            <person name="Lin J."/>
            <person name="Yen G."/>
            <person name="Schwartz D.C."/>
            <person name="Welch R.A."/>
            <person name="Blattner F.R."/>
        </authorList>
    </citation>
    <scope>NUCLEOTIDE SEQUENCE [LARGE SCALE GENOMIC DNA]</scope>
    <source>
        <strain>O157:H7 / EDL933 / ATCC 700927 / EHEC</strain>
    </source>
</reference>
<reference key="2">
    <citation type="journal article" date="2001" name="DNA Res.">
        <title>Complete genome sequence of enterohemorrhagic Escherichia coli O157:H7 and genomic comparison with a laboratory strain K-12.</title>
        <authorList>
            <person name="Hayashi T."/>
            <person name="Makino K."/>
            <person name="Ohnishi M."/>
            <person name="Kurokawa K."/>
            <person name="Ishii K."/>
            <person name="Yokoyama K."/>
            <person name="Han C.-G."/>
            <person name="Ohtsubo E."/>
            <person name="Nakayama K."/>
            <person name="Murata T."/>
            <person name="Tanaka M."/>
            <person name="Tobe T."/>
            <person name="Iida T."/>
            <person name="Takami H."/>
            <person name="Honda T."/>
            <person name="Sasakawa C."/>
            <person name="Ogasawara N."/>
            <person name="Yasunaga T."/>
            <person name="Kuhara S."/>
            <person name="Shiba T."/>
            <person name="Hattori M."/>
            <person name="Shinagawa H."/>
        </authorList>
    </citation>
    <scope>NUCLEOTIDE SEQUENCE [LARGE SCALE GENOMIC DNA]</scope>
    <source>
        <strain>O157:H7 / Sakai / RIMD 0509952 / EHEC</strain>
    </source>
</reference>
<keyword id="KW-0378">Hydrolase</keyword>
<keyword id="KW-1185">Reference proteome</keyword>
<sequence>MATYLIGDVHGCYDELIALLHKVEFTPGKDTLWLTGDLVARGPGSLDVLRYVKSLGDSVRLVLGNHDLHLLAVFAGISRNKPKDRLTPLLEAPDADELLNWLRRQPLLQIDEEKKLVMAHAGITPQWDLQTAKECARDVEAVLSSDSYPFFLDAMYGDMPNNWSPELRGLGRLRFITNAFTRMRFCFPNGQLDMYSKESPEEAPAPLKPWFAIPGPVAEEYSIAFGHWASLEGKGTPEGIYALDTGCCWGGSLTCLRWEDKQYFVQPSNRHKDLGEGEAVAS</sequence>
<accession>Q8XA15</accession>
<feature type="chain" id="PRO_0000197990" description="Bis(5'-nucleosyl)-tetraphosphatase, symmetrical">
    <location>
        <begin position="1"/>
        <end position="282"/>
    </location>
</feature>
<gene>
    <name evidence="2" type="primary">apaH</name>
    <name type="ordered locus">Z0058</name>
    <name type="ordered locus">ECs0054</name>
</gene>
<dbReference type="EC" id="3.6.1.41" evidence="2"/>
<dbReference type="EMBL" id="AE005174">
    <property type="protein sequence ID" value="AAG54354.1"/>
    <property type="molecule type" value="Genomic_DNA"/>
</dbReference>
<dbReference type="EMBL" id="BA000007">
    <property type="protein sequence ID" value="BAB33477.1"/>
    <property type="molecule type" value="Genomic_DNA"/>
</dbReference>
<dbReference type="PIR" id="F85486">
    <property type="entry name" value="F85486"/>
</dbReference>
<dbReference type="PIR" id="F90635">
    <property type="entry name" value="F90635"/>
</dbReference>
<dbReference type="RefSeq" id="NP_308081.1">
    <property type="nucleotide sequence ID" value="NC_002695.1"/>
</dbReference>
<dbReference type="RefSeq" id="WP_000257187.1">
    <property type="nucleotide sequence ID" value="NZ_VOAI01000002.1"/>
</dbReference>
<dbReference type="SMR" id="Q8XA15"/>
<dbReference type="STRING" id="155864.Z0058"/>
<dbReference type="GeneID" id="913453"/>
<dbReference type="KEGG" id="ece:Z0058"/>
<dbReference type="KEGG" id="ecs:ECs_0054"/>
<dbReference type="PATRIC" id="fig|386585.9.peg.153"/>
<dbReference type="eggNOG" id="COG0639">
    <property type="taxonomic scope" value="Bacteria"/>
</dbReference>
<dbReference type="HOGENOM" id="CLU_056184_2_0_6"/>
<dbReference type="OMA" id="INAFTRM"/>
<dbReference type="Proteomes" id="UP000000558">
    <property type="component" value="Chromosome"/>
</dbReference>
<dbReference type="Proteomes" id="UP000002519">
    <property type="component" value="Chromosome"/>
</dbReference>
<dbReference type="GO" id="GO:0008803">
    <property type="term" value="F:bis(5'-nucleosyl)-tetraphosphatase (symmetrical) activity"/>
    <property type="evidence" value="ECO:0007669"/>
    <property type="project" value="UniProtKB-UniRule"/>
</dbReference>
<dbReference type="CDD" id="cd07422">
    <property type="entry name" value="MPP_ApaH"/>
    <property type="match status" value="1"/>
</dbReference>
<dbReference type="FunFam" id="3.60.21.10:FF:000013">
    <property type="entry name" value="Bis(5'-nucleosyl)-tetraphosphatase, symmetrical"/>
    <property type="match status" value="1"/>
</dbReference>
<dbReference type="Gene3D" id="3.60.21.10">
    <property type="match status" value="1"/>
</dbReference>
<dbReference type="HAMAP" id="MF_00199">
    <property type="entry name" value="ApaH"/>
    <property type="match status" value="1"/>
</dbReference>
<dbReference type="InterPro" id="IPR004617">
    <property type="entry name" value="ApaH"/>
</dbReference>
<dbReference type="InterPro" id="IPR004843">
    <property type="entry name" value="Calcineurin-like_PHP_ApaH"/>
</dbReference>
<dbReference type="InterPro" id="IPR029052">
    <property type="entry name" value="Metallo-depent_PP-like"/>
</dbReference>
<dbReference type="NCBIfam" id="TIGR00668">
    <property type="entry name" value="apaH"/>
    <property type="match status" value="1"/>
</dbReference>
<dbReference type="NCBIfam" id="NF001204">
    <property type="entry name" value="PRK00166.1"/>
    <property type="match status" value="1"/>
</dbReference>
<dbReference type="PANTHER" id="PTHR40942">
    <property type="match status" value="1"/>
</dbReference>
<dbReference type="PANTHER" id="PTHR40942:SF4">
    <property type="entry name" value="CYTOCHROME C5"/>
    <property type="match status" value="1"/>
</dbReference>
<dbReference type="Pfam" id="PF00149">
    <property type="entry name" value="Metallophos"/>
    <property type="match status" value="1"/>
</dbReference>
<dbReference type="PIRSF" id="PIRSF000903">
    <property type="entry name" value="B5n-ttraPtase_sm"/>
    <property type="match status" value="1"/>
</dbReference>
<dbReference type="SUPFAM" id="SSF56300">
    <property type="entry name" value="Metallo-dependent phosphatases"/>
    <property type="match status" value="1"/>
</dbReference>
<comment type="function">
    <text evidence="2">Hydrolyzes diadenosine 5',5'''-P1,P4-tetraphosphate to yield ADP.</text>
</comment>
<comment type="catalytic activity">
    <reaction evidence="2">
        <text>P(1),P(4)-bis(5'-adenosyl) tetraphosphate + H2O = 2 ADP + 2 H(+)</text>
        <dbReference type="Rhea" id="RHEA:24252"/>
        <dbReference type="ChEBI" id="CHEBI:15377"/>
        <dbReference type="ChEBI" id="CHEBI:15378"/>
        <dbReference type="ChEBI" id="CHEBI:58141"/>
        <dbReference type="ChEBI" id="CHEBI:456216"/>
        <dbReference type="EC" id="3.6.1.41"/>
    </reaction>
</comment>
<comment type="subunit">
    <text evidence="1">Monomer.</text>
</comment>
<comment type="similarity">
    <text evidence="2">Belongs to the Ap4A hydrolase family.</text>
</comment>
<protein>
    <recommendedName>
        <fullName evidence="2">Bis(5'-nucleosyl)-tetraphosphatase, symmetrical</fullName>
        <ecNumber evidence="2">3.6.1.41</ecNumber>
    </recommendedName>
    <alternativeName>
        <fullName evidence="2">Ap4A hydrolase</fullName>
    </alternativeName>
    <alternativeName>
        <fullName evidence="2">Diadenosine 5',5'''-P1,P4-tetraphosphate pyrophosphohydrolase</fullName>
    </alternativeName>
    <alternativeName>
        <fullName evidence="2">Diadenosine tetraphosphatase</fullName>
    </alternativeName>
</protein>
<organism>
    <name type="scientific">Escherichia coli O157:H7</name>
    <dbReference type="NCBI Taxonomy" id="83334"/>
    <lineage>
        <taxon>Bacteria</taxon>
        <taxon>Pseudomonadati</taxon>
        <taxon>Pseudomonadota</taxon>
        <taxon>Gammaproteobacteria</taxon>
        <taxon>Enterobacterales</taxon>
        <taxon>Enterobacteriaceae</taxon>
        <taxon>Escherichia</taxon>
    </lineage>
</organism>